<name>THIA_CANTR</name>
<proteinExistence type="evidence at protein level"/>
<reference key="1">
    <citation type="journal article" date="1992" name="Eur. J. Biochem.">
        <title>Peroxisomal acetoacetyl-CoA thiolase of an n-alkane-utilizing yeast, Candida tropicalis.</title>
        <authorList>
            <person name="Kurihara T."/>
            <person name="Ueda M."/>
            <person name="Kanayama N."/>
            <person name="Kondo J."/>
            <person name="Teranishi Y."/>
            <person name="Tanaka A."/>
        </authorList>
    </citation>
    <scope>NUCLEOTIDE SEQUENCE [GENOMIC DNA]</scope>
    <scope>PROTEIN SEQUENCE OF 2-17; 209-233 AND 280-290</scope>
    <source>
        <strain>ATCC 20336 / pK233 / NCYC 997</strain>
    </source>
</reference>
<organism>
    <name type="scientific">Candida tropicalis</name>
    <name type="common">Yeast</name>
    <dbReference type="NCBI Taxonomy" id="5482"/>
    <lineage>
        <taxon>Eukaryota</taxon>
        <taxon>Fungi</taxon>
        <taxon>Dikarya</taxon>
        <taxon>Ascomycota</taxon>
        <taxon>Saccharomycotina</taxon>
        <taxon>Pichiomycetes</taxon>
        <taxon>Debaryomycetaceae</taxon>
        <taxon>Candida/Lodderomyces clade</taxon>
        <taxon>Candida</taxon>
    </lineage>
</organism>
<comment type="catalytic activity">
    <reaction evidence="3">
        <text>2 acetyl-CoA = acetoacetyl-CoA + CoA</text>
        <dbReference type="Rhea" id="RHEA:21036"/>
        <dbReference type="ChEBI" id="CHEBI:57286"/>
        <dbReference type="ChEBI" id="CHEBI:57287"/>
        <dbReference type="ChEBI" id="CHEBI:57288"/>
        <dbReference type="EC" id="2.3.1.9"/>
    </reaction>
</comment>
<comment type="pathway">
    <text>Metabolic intermediate biosynthesis; (R)-mevalonate biosynthesis; (R)-mevalonate from acetyl-CoA: step 1/3.</text>
</comment>
<comment type="subunit">
    <text evidence="1">Multimeric.</text>
</comment>
<comment type="subcellular location">
    <subcellularLocation>
        <location>Peroxisome</location>
    </subcellularLocation>
</comment>
<comment type="similarity">
    <text evidence="5">Belongs to the thiolase-like superfamily. Thiolase family.</text>
</comment>
<dbReference type="EC" id="2.3.1.9"/>
<dbReference type="EMBL" id="D13470">
    <property type="protein sequence ID" value="BAA02715.1"/>
    <property type="molecule type" value="Genomic_DNA"/>
</dbReference>
<dbReference type="PIR" id="S28144">
    <property type="entry name" value="S28144"/>
</dbReference>
<dbReference type="SMR" id="Q12598"/>
<dbReference type="VEuPathDB" id="FungiDB:CTMYA2_016100"/>
<dbReference type="VEuPathDB" id="FungiDB:CTRG_01584"/>
<dbReference type="BRENDA" id="2.3.1.9">
    <property type="organism ID" value="1146"/>
</dbReference>
<dbReference type="SABIO-RK" id="Q12598"/>
<dbReference type="UniPathway" id="UPA00058">
    <property type="reaction ID" value="UER00101"/>
</dbReference>
<dbReference type="GO" id="GO:0005739">
    <property type="term" value="C:mitochondrion"/>
    <property type="evidence" value="ECO:0007669"/>
    <property type="project" value="TreeGrafter"/>
</dbReference>
<dbReference type="GO" id="GO:0005777">
    <property type="term" value="C:peroxisome"/>
    <property type="evidence" value="ECO:0007669"/>
    <property type="project" value="UniProtKB-SubCell"/>
</dbReference>
<dbReference type="GO" id="GO:0003985">
    <property type="term" value="F:acetyl-CoA C-acetyltransferase activity"/>
    <property type="evidence" value="ECO:0007669"/>
    <property type="project" value="UniProtKB-EC"/>
</dbReference>
<dbReference type="GO" id="GO:0006696">
    <property type="term" value="P:ergosterol biosynthetic process"/>
    <property type="evidence" value="ECO:0007669"/>
    <property type="project" value="TreeGrafter"/>
</dbReference>
<dbReference type="GO" id="GO:0006635">
    <property type="term" value="P:fatty acid beta-oxidation"/>
    <property type="evidence" value="ECO:0007669"/>
    <property type="project" value="TreeGrafter"/>
</dbReference>
<dbReference type="CDD" id="cd00751">
    <property type="entry name" value="thiolase"/>
    <property type="match status" value="1"/>
</dbReference>
<dbReference type="FunFam" id="3.40.47.10:FF:000007">
    <property type="entry name" value="acetyl-CoA acetyltransferase, mitochondrial"/>
    <property type="match status" value="1"/>
</dbReference>
<dbReference type="Gene3D" id="3.40.47.10">
    <property type="match status" value="1"/>
</dbReference>
<dbReference type="InterPro" id="IPR002155">
    <property type="entry name" value="Thiolase"/>
</dbReference>
<dbReference type="InterPro" id="IPR016039">
    <property type="entry name" value="Thiolase-like"/>
</dbReference>
<dbReference type="InterPro" id="IPR020615">
    <property type="entry name" value="Thiolase_acyl_enz_int_AS"/>
</dbReference>
<dbReference type="InterPro" id="IPR020610">
    <property type="entry name" value="Thiolase_AS"/>
</dbReference>
<dbReference type="InterPro" id="IPR020617">
    <property type="entry name" value="Thiolase_C"/>
</dbReference>
<dbReference type="InterPro" id="IPR020613">
    <property type="entry name" value="Thiolase_CS"/>
</dbReference>
<dbReference type="InterPro" id="IPR020616">
    <property type="entry name" value="Thiolase_N"/>
</dbReference>
<dbReference type="NCBIfam" id="TIGR01930">
    <property type="entry name" value="AcCoA-C-Actrans"/>
    <property type="match status" value="1"/>
</dbReference>
<dbReference type="PANTHER" id="PTHR18919:SF165">
    <property type="entry name" value="ACETYL-COA ACETYLTRANSFERASE"/>
    <property type="match status" value="1"/>
</dbReference>
<dbReference type="PANTHER" id="PTHR18919">
    <property type="entry name" value="ACETYL-COA C-ACYLTRANSFERASE"/>
    <property type="match status" value="1"/>
</dbReference>
<dbReference type="Pfam" id="PF02803">
    <property type="entry name" value="Thiolase_C"/>
    <property type="match status" value="1"/>
</dbReference>
<dbReference type="Pfam" id="PF00108">
    <property type="entry name" value="Thiolase_N"/>
    <property type="match status" value="1"/>
</dbReference>
<dbReference type="PIRSF" id="PIRSF000429">
    <property type="entry name" value="Ac-CoA_Ac_transf"/>
    <property type="match status" value="1"/>
</dbReference>
<dbReference type="SUPFAM" id="SSF53901">
    <property type="entry name" value="Thiolase-like"/>
    <property type="match status" value="2"/>
</dbReference>
<dbReference type="PROSITE" id="PS00098">
    <property type="entry name" value="THIOLASE_1"/>
    <property type="match status" value="1"/>
</dbReference>
<dbReference type="PROSITE" id="PS00737">
    <property type="entry name" value="THIOLASE_2"/>
    <property type="match status" value="1"/>
</dbReference>
<dbReference type="PROSITE" id="PS00099">
    <property type="entry name" value="THIOLASE_3"/>
    <property type="match status" value="1"/>
</dbReference>
<keyword id="KW-0012">Acyltransferase</keyword>
<keyword id="KW-0903">Direct protein sequencing</keyword>
<keyword id="KW-0576">Peroxisome</keyword>
<keyword id="KW-0808">Transferase</keyword>
<gene>
    <name type="primary">PACTA</name>
</gene>
<feature type="initiator methionine" description="Removed" evidence="4">
    <location>
        <position position="1"/>
    </location>
</feature>
<feature type="chain" id="PRO_0000206413" description="Acetyl-CoA acetyltransferase IA">
    <location>
        <begin position="2"/>
        <end position="403"/>
    </location>
</feature>
<feature type="short sequence motif" description="Microbody targeting signal" evidence="2">
    <location>
        <begin position="401"/>
        <end position="403"/>
    </location>
</feature>
<feature type="active site" description="Acyl-thioester intermediate" evidence="1">
    <location>
        <position position="91"/>
    </location>
</feature>
<feature type="active site" description="Proton acceptor" evidence="3">
    <location>
        <position position="353"/>
    </location>
</feature>
<feature type="active site" description="Proton acceptor" evidence="3">
    <location>
        <position position="383"/>
    </location>
</feature>
<protein>
    <recommendedName>
        <fullName>Acetyl-CoA acetyltransferase IA</fullName>
        <ecNumber>2.3.1.9</ecNumber>
    </recommendedName>
    <alternativeName>
        <fullName>Peroxisomal acetoacetyl-CoA thiolase</fullName>
    </alternativeName>
    <alternativeName>
        <fullName>Thiolase IA</fullName>
    </alternativeName>
</protein>
<evidence type="ECO:0000250" key="1"/>
<evidence type="ECO:0000255" key="2"/>
<evidence type="ECO:0000255" key="3">
    <source>
        <dbReference type="PROSITE-ProRule" id="PRU10020"/>
    </source>
</evidence>
<evidence type="ECO:0000269" key="4">
    <source>
    </source>
</evidence>
<evidence type="ECO:0000305" key="5"/>
<accession>Q12598</accession>
<sequence>MALPPVYIVSTARTPIGSFQGSLSSLTYSDLGAHAVKAALAKVPQIKPQDVDEIVFGGVLQANVGQAPARQVALKAGLPDSIVASTINKVCASGMKAVIIGAQNIICGTSDIVVVGGAESMSNTPYYLPSARSGARYGDAIMVDGVQKDGLLDVYEEKLMGVAAEKCAKDHGFSREDQDNFAINSYKKAGKALSEGKFKSEIAPVTIKGFRGKPDTVIENDEEIGKFNEERLKSARTVFQKENGTVTAPNASKLNDGGAALVLVSEAKLKQLGLKPLAKISGWGEAARTPFDFTIAPALAVPKAVKHAGLTVDRVDFFELNEAFSVVGLANAELVNIPLEKLNVYGGAVAMGHPLGCSGARIIVTLLSVLTQEGGRFGVAGVCNGGGGASAVVIEKIDADAKL</sequence>